<dbReference type="EC" id="7.1.1.-" evidence="1"/>
<dbReference type="EMBL" id="AL123456">
    <property type="protein sequence ID" value="CCP45963.1"/>
    <property type="molecule type" value="Genomic_DNA"/>
</dbReference>
<dbReference type="PIR" id="A70648">
    <property type="entry name" value="A70648"/>
</dbReference>
<dbReference type="RefSeq" id="NP_217668.1">
    <property type="nucleotide sequence ID" value="NC_000962.3"/>
</dbReference>
<dbReference type="RefSeq" id="WP_003416445.1">
    <property type="nucleotide sequence ID" value="NZ_NVQJ01000019.1"/>
</dbReference>
<dbReference type="SMR" id="P9WIX1"/>
<dbReference type="FunCoup" id="P9WIX1">
    <property type="interactions" value="77"/>
</dbReference>
<dbReference type="STRING" id="83332.Rv3152"/>
<dbReference type="PaxDb" id="83332-Rv3152"/>
<dbReference type="DNASU" id="887531"/>
<dbReference type="GeneID" id="45427139"/>
<dbReference type="GeneID" id="887531"/>
<dbReference type="KEGG" id="mtu:Rv3152"/>
<dbReference type="KEGG" id="mtv:RVBD_3152"/>
<dbReference type="TubercuList" id="Rv3152"/>
<dbReference type="eggNOG" id="COG1005">
    <property type="taxonomic scope" value="Bacteria"/>
</dbReference>
<dbReference type="InParanoid" id="P9WIX1"/>
<dbReference type="OrthoDB" id="9803734at2"/>
<dbReference type="PhylomeDB" id="P9WIX1"/>
<dbReference type="Proteomes" id="UP000001584">
    <property type="component" value="Chromosome"/>
</dbReference>
<dbReference type="GO" id="GO:0005886">
    <property type="term" value="C:plasma membrane"/>
    <property type="evidence" value="ECO:0007669"/>
    <property type="project" value="UniProtKB-SubCell"/>
</dbReference>
<dbReference type="GO" id="GO:0016655">
    <property type="term" value="F:oxidoreductase activity, acting on NAD(P)H, quinone or similar compound as acceptor"/>
    <property type="evidence" value="ECO:0007669"/>
    <property type="project" value="UniProtKB-UniRule"/>
</dbReference>
<dbReference type="GO" id="GO:0048038">
    <property type="term" value="F:quinone binding"/>
    <property type="evidence" value="ECO:0007669"/>
    <property type="project" value="UniProtKB-KW"/>
</dbReference>
<dbReference type="GO" id="GO:0009060">
    <property type="term" value="P:aerobic respiration"/>
    <property type="evidence" value="ECO:0000318"/>
    <property type="project" value="GO_Central"/>
</dbReference>
<dbReference type="HAMAP" id="MF_01350">
    <property type="entry name" value="NDH1_NuoH"/>
    <property type="match status" value="1"/>
</dbReference>
<dbReference type="InterPro" id="IPR001694">
    <property type="entry name" value="NADH_UbQ_OxRdtase_su1/FPO"/>
</dbReference>
<dbReference type="InterPro" id="IPR018086">
    <property type="entry name" value="NADH_UbQ_OxRdtase_su1_CS"/>
</dbReference>
<dbReference type="NCBIfam" id="NF004741">
    <property type="entry name" value="PRK06076.1-2"/>
    <property type="match status" value="1"/>
</dbReference>
<dbReference type="NCBIfam" id="NF004743">
    <property type="entry name" value="PRK06076.1-4"/>
    <property type="match status" value="1"/>
</dbReference>
<dbReference type="PANTHER" id="PTHR11432">
    <property type="entry name" value="NADH DEHYDROGENASE SUBUNIT 1"/>
    <property type="match status" value="1"/>
</dbReference>
<dbReference type="PANTHER" id="PTHR11432:SF3">
    <property type="entry name" value="NADH-UBIQUINONE OXIDOREDUCTASE CHAIN 1"/>
    <property type="match status" value="1"/>
</dbReference>
<dbReference type="Pfam" id="PF00146">
    <property type="entry name" value="NADHdh"/>
    <property type="match status" value="1"/>
</dbReference>
<dbReference type="PROSITE" id="PS00667">
    <property type="entry name" value="COMPLEX1_ND1_1"/>
    <property type="match status" value="1"/>
</dbReference>
<dbReference type="PROSITE" id="PS00668">
    <property type="entry name" value="COMPLEX1_ND1_2"/>
    <property type="match status" value="1"/>
</dbReference>
<feature type="chain" id="PRO_0000117529" description="NADH-quinone oxidoreductase subunit H">
    <location>
        <begin position="1"/>
        <end position="410"/>
    </location>
</feature>
<feature type="transmembrane region" description="Helical" evidence="1">
    <location>
        <begin position="11"/>
        <end position="31"/>
    </location>
</feature>
<feature type="transmembrane region" description="Helical" evidence="1">
    <location>
        <begin position="79"/>
        <end position="99"/>
    </location>
</feature>
<feature type="transmembrane region" description="Helical" evidence="1">
    <location>
        <begin position="119"/>
        <end position="139"/>
    </location>
</feature>
<feature type="transmembrane region" description="Helical" evidence="1">
    <location>
        <begin position="160"/>
        <end position="180"/>
    </location>
</feature>
<feature type="transmembrane region" description="Helical" evidence="1">
    <location>
        <begin position="192"/>
        <end position="212"/>
    </location>
</feature>
<feature type="transmembrane region" description="Helical" evidence="1">
    <location>
        <begin position="257"/>
        <end position="277"/>
    </location>
</feature>
<feature type="transmembrane region" description="Helical" evidence="1">
    <location>
        <begin position="283"/>
        <end position="303"/>
    </location>
</feature>
<feature type="transmembrane region" description="Helical" evidence="1">
    <location>
        <begin position="317"/>
        <end position="337"/>
    </location>
</feature>
<feature type="transmembrane region" description="Helical" evidence="1">
    <location>
        <begin position="347"/>
        <end position="367"/>
    </location>
</feature>
<feature type="region of interest" description="Disordered" evidence="2">
    <location>
        <begin position="376"/>
        <end position="410"/>
    </location>
</feature>
<reference key="1">
    <citation type="journal article" date="1998" name="Nature">
        <title>Deciphering the biology of Mycobacterium tuberculosis from the complete genome sequence.</title>
        <authorList>
            <person name="Cole S.T."/>
            <person name="Brosch R."/>
            <person name="Parkhill J."/>
            <person name="Garnier T."/>
            <person name="Churcher C.M."/>
            <person name="Harris D.E."/>
            <person name="Gordon S.V."/>
            <person name="Eiglmeier K."/>
            <person name="Gas S."/>
            <person name="Barry C.E. III"/>
            <person name="Tekaia F."/>
            <person name="Badcock K."/>
            <person name="Basham D."/>
            <person name="Brown D."/>
            <person name="Chillingworth T."/>
            <person name="Connor R."/>
            <person name="Davies R.M."/>
            <person name="Devlin K."/>
            <person name="Feltwell T."/>
            <person name="Gentles S."/>
            <person name="Hamlin N."/>
            <person name="Holroyd S."/>
            <person name="Hornsby T."/>
            <person name="Jagels K."/>
            <person name="Krogh A."/>
            <person name="McLean J."/>
            <person name="Moule S."/>
            <person name="Murphy L.D."/>
            <person name="Oliver S."/>
            <person name="Osborne J."/>
            <person name="Quail M.A."/>
            <person name="Rajandream M.A."/>
            <person name="Rogers J."/>
            <person name="Rutter S."/>
            <person name="Seeger K."/>
            <person name="Skelton S."/>
            <person name="Squares S."/>
            <person name="Squares R."/>
            <person name="Sulston J.E."/>
            <person name="Taylor K."/>
            <person name="Whitehead S."/>
            <person name="Barrell B.G."/>
        </authorList>
    </citation>
    <scope>NUCLEOTIDE SEQUENCE [LARGE SCALE GENOMIC DNA]</scope>
    <source>
        <strain>ATCC 25618 / H37Rv</strain>
    </source>
</reference>
<reference key="2">
    <citation type="journal article" date="2011" name="Mol. Cell. Proteomics">
        <title>Proteogenomic analysis of Mycobacterium tuberculosis by high resolution mass spectrometry.</title>
        <authorList>
            <person name="Kelkar D.S."/>
            <person name="Kumar D."/>
            <person name="Kumar P."/>
            <person name="Balakrishnan L."/>
            <person name="Muthusamy B."/>
            <person name="Yadav A.K."/>
            <person name="Shrivastava P."/>
            <person name="Marimuthu A."/>
            <person name="Anand S."/>
            <person name="Sundaram H."/>
            <person name="Kingsbury R."/>
            <person name="Harsha H.C."/>
            <person name="Nair B."/>
            <person name="Prasad T.S."/>
            <person name="Chauhan D.S."/>
            <person name="Katoch K."/>
            <person name="Katoch V.M."/>
            <person name="Kumar P."/>
            <person name="Chaerkady R."/>
            <person name="Ramachandran S."/>
            <person name="Dash D."/>
            <person name="Pandey A."/>
        </authorList>
    </citation>
    <scope>IDENTIFICATION BY MASS SPECTROMETRY [LARGE SCALE ANALYSIS]</scope>
    <source>
        <strain>ATCC 25618 / H37Rv</strain>
    </source>
</reference>
<organism>
    <name type="scientific">Mycobacterium tuberculosis (strain ATCC 25618 / H37Rv)</name>
    <dbReference type="NCBI Taxonomy" id="83332"/>
    <lineage>
        <taxon>Bacteria</taxon>
        <taxon>Bacillati</taxon>
        <taxon>Actinomycetota</taxon>
        <taxon>Actinomycetes</taxon>
        <taxon>Mycobacteriales</taxon>
        <taxon>Mycobacteriaceae</taxon>
        <taxon>Mycobacterium</taxon>
        <taxon>Mycobacterium tuberculosis complex</taxon>
    </lineage>
</organism>
<comment type="function">
    <text evidence="1">NDH-1 shuttles electrons from NADH, via FMN and iron-sulfur (Fe-S) centers, to quinones in the respiratory chain. The immediate electron acceptor for the enzyme in this species is believed to be menaquinone. Couples the redox reaction to proton translocation (for every two electrons transferred, four hydrogen ions are translocated across the cytoplasmic membrane), and thus conserves the redox energy in a proton gradient.</text>
</comment>
<comment type="catalytic activity">
    <reaction evidence="1">
        <text>a quinone + NADH + 5 H(+)(in) = a quinol + NAD(+) + 4 H(+)(out)</text>
        <dbReference type="Rhea" id="RHEA:57888"/>
        <dbReference type="ChEBI" id="CHEBI:15378"/>
        <dbReference type="ChEBI" id="CHEBI:24646"/>
        <dbReference type="ChEBI" id="CHEBI:57540"/>
        <dbReference type="ChEBI" id="CHEBI:57945"/>
        <dbReference type="ChEBI" id="CHEBI:132124"/>
    </reaction>
</comment>
<comment type="subunit">
    <text evidence="1">NDH-1 is composed of 14 different subunits. Subunits NuoA, H, J, K, L, M, N constitute the membrane sector of the complex.</text>
</comment>
<comment type="subcellular location">
    <subcellularLocation>
        <location evidence="1">Cell membrane</location>
        <topology evidence="1">Multi-pass membrane protein</topology>
    </subcellularLocation>
</comment>
<comment type="similarity">
    <text evidence="1">Belongs to the complex I subunit 1 family.</text>
</comment>
<accession>P9WIX1</accession>
<accession>L0TBZ7</accession>
<accession>P65561</accession>
<accession>P95174</accession>
<name>NUOH_MYCTU</name>
<keyword id="KW-1003">Cell membrane</keyword>
<keyword id="KW-0472">Membrane</keyword>
<keyword id="KW-0520">NAD</keyword>
<keyword id="KW-0874">Quinone</keyword>
<keyword id="KW-1185">Reference proteome</keyword>
<keyword id="KW-1278">Translocase</keyword>
<keyword id="KW-0812">Transmembrane</keyword>
<keyword id="KW-1133">Transmembrane helix</keyword>
<evidence type="ECO:0000255" key="1">
    <source>
        <dbReference type="HAMAP-Rule" id="MF_01350"/>
    </source>
</evidence>
<evidence type="ECO:0000256" key="2">
    <source>
        <dbReference type="SAM" id="MobiDB-lite"/>
    </source>
</evidence>
<proteinExistence type="evidence at protein level"/>
<protein>
    <recommendedName>
        <fullName evidence="1">NADH-quinone oxidoreductase subunit H</fullName>
        <ecNumber evidence="1">7.1.1.-</ecNumber>
    </recommendedName>
    <alternativeName>
        <fullName evidence="1">NADH dehydrogenase I subunit H</fullName>
    </alternativeName>
    <alternativeName>
        <fullName evidence="1">NDH-1 subunit H</fullName>
    </alternativeName>
</protein>
<sequence length="410" mass="44658">MTTFGHDTWWLVAAKAIAVFVFLMLTVLVAILAERKLLGRMQLRPGPNRVGPKGALQSLADGIKLALKESITPGGIDRFVYFVAPIISVIPAFTAFAFIPFGPEVSVFGHRTPLQITDLPVAVLFILGLSAIGVYGIVLGGWASGSTYPLLGGVRSTAQVISYEVAMGLSFATVFLMAGTMSTSQIVAAQDGVWYAFLLLPSFVIYLISMVGETNRAPFDLPEAEGELVAGFHTEYSSLKFAMFMLAEYVNMTTVSALAATLFFGGWHAPWPLNMWASANTGWWPLIWFTAKVWGFLFIYFWLRATLPRLRYDQFMALGWKLLIPVSLVWVMVAAIIRSLRNQGYQYWTPTLVFSSIVVAAAMVLLLRKPLSAPGARASARQRGDEGTSPEPAFPTPPLLAGATKENAGG</sequence>
<gene>
    <name evidence="1" type="primary">nuoH</name>
    <name type="ordered locus">Rv3152</name>
    <name type="ORF">MTCY03A2.06c</name>
</gene>